<comment type="function">
    <text evidence="2">This protein recognizes C4b and C3b fragments that condense with cell-surface hydroxyl or amino groups when nascent C4b and C3b are locally generated during C4 and c3 activation. Interaction of daf with cell-associated C4b and C3b polypeptides interferes with their ability to catalyze the conversion of C2 and factor B to enzymatically active C2a and Bb and thereby prevents the formation of C4b2a and C3bBb, the amplification convertases of the complement cascade. Inhibits complement activation by destabilizing and preventing the formation of C3 and C5 convertases, which prevents complement damage.</text>
</comment>
<comment type="subcellular location">
    <subcellularLocation>
        <location evidence="1">Cell membrane</location>
        <topology evidence="1">Lipid-anchor</topology>
        <topology evidence="1">GPI-anchor</topology>
    </subcellularLocation>
</comment>
<comment type="tissue specificity">
    <text>Brain, secretory epithelia, skeletal muscle, liver, testes, thymus, spleen and lymph node.</text>
</comment>
<comment type="domain">
    <text evidence="1">The first Sushi domain (SCR1) is not necessary for function. SCR2 and SCR4 provide the proper conformation for the active site on SCR3 (By similarity).</text>
</comment>
<comment type="similarity">
    <text evidence="6">Belongs to the receptors of complement activation (RCA) family.</text>
</comment>
<protein>
    <recommendedName>
        <fullName>Complement decay-accelerating factor, GPI-anchored</fullName>
        <shortName>DAF-GPI</shortName>
    </recommendedName>
    <cdAntigenName>CD55</cdAntigenName>
</protein>
<accession>Q61475</accession>
<accession>P97732</accession>
<accession>Q3TU32</accession>
<accession>Q4FJS4</accession>
<accession>Q61397</accession>
<accession>Q76N72</accession>
<accession>Q921P0</accession>
<accession>Q9R1C1</accession>
<evidence type="ECO:0000250" key="1"/>
<evidence type="ECO:0000250" key="2">
    <source>
        <dbReference type="UniProtKB" id="P08174"/>
    </source>
</evidence>
<evidence type="ECO:0000255" key="3"/>
<evidence type="ECO:0000255" key="4">
    <source>
        <dbReference type="PROSITE-ProRule" id="PRU00302"/>
    </source>
</evidence>
<evidence type="ECO:0000256" key="5">
    <source>
        <dbReference type="SAM" id="MobiDB-lite"/>
    </source>
</evidence>
<evidence type="ECO:0000305" key="6"/>
<feature type="signal peptide" evidence="3">
    <location>
        <begin position="1"/>
        <end position="34"/>
    </location>
</feature>
<feature type="chain" id="PRO_0000006004" description="Complement decay-accelerating factor, GPI-anchored">
    <location>
        <begin position="35"/>
        <end position="362"/>
    </location>
</feature>
<feature type="propeptide" id="PRO_0000006005" description="Removed in mature form" evidence="3">
    <location>
        <begin position="363"/>
        <end position="390"/>
    </location>
</feature>
<feature type="domain" description="Sushi 1" evidence="4">
    <location>
        <begin position="35"/>
        <end position="96"/>
    </location>
</feature>
<feature type="domain" description="Sushi 2" evidence="4">
    <location>
        <begin position="97"/>
        <end position="160"/>
    </location>
</feature>
<feature type="domain" description="Sushi 3" evidence="4">
    <location>
        <begin position="161"/>
        <end position="222"/>
    </location>
</feature>
<feature type="domain" description="Sushi 4" evidence="4">
    <location>
        <begin position="223"/>
        <end position="286"/>
    </location>
</feature>
<feature type="region of interest" description="Disordered" evidence="5">
    <location>
        <begin position="273"/>
        <end position="362"/>
    </location>
</feature>
<feature type="compositionally biased region" description="Polar residues" evidence="5">
    <location>
        <begin position="298"/>
        <end position="319"/>
    </location>
</feature>
<feature type="compositionally biased region" description="Polar residues" evidence="5">
    <location>
        <begin position="327"/>
        <end position="344"/>
    </location>
</feature>
<feature type="lipid moiety-binding region" description="GPI-anchor amidated glycine" evidence="3">
    <location>
        <position position="362"/>
    </location>
</feature>
<feature type="glycosylation site" description="N-linked (GlcNAc...) asparagine" evidence="3">
    <location>
        <position position="187"/>
    </location>
</feature>
<feature type="glycosylation site" description="N-linked (GlcNAc...) asparagine" evidence="3">
    <location>
        <position position="262"/>
    </location>
</feature>
<feature type="disulfide bond" evidence="4">
    <location>
        <begin position="36"/>
        <end position="81"/>
    </location>
</feature>
<feature type="disulfide bond" evidence="4">
    <location>
        <begin position="65"/>
        <end position="94"/>
    </location>
</feature>
<feature type="disulfide bond" evidence="4">
    <location>
        <begin position="98"/>
        <end position="145"/>
    </location>
</feature>
<feature type="disulfide bond" evidence="4">
    <location>
        <begin position="129"/>
        <end position="158"/>
    </location>
</feature>
<feature type="disulfide bond" evidence="4">
    <location>
        <begin position="163"/>
        <end position="204"/>
    </location>
</feature>
<feature type="disulfide bond" evidence="4">
    <location>
        <begin position="190"/>
        <end position="220"/>
    </location>
</feature>
<feature type="disulfide bond" evidence="4">
    <location>
        <begin position="225"/>
        <end position="267"/>
    </location>
</feature>
<feature type="disulfide bond" evidence="4">
    <location>
        <begin position="253"/>
        <end position="284"/>
    </location>
</feature>
<feature type="sequence conflict" description="In Ref. 5; BAA09830." evidence="6" ref="5">
    <original>PRT</original>
    <variation>ARA</variation>
    <location>
        <begin position="7"/>
        <end position="9"/>
    </location>
</feature>
<feature type="sequence conflict" description="In Ref. 5; BAA09830." evidence="6" ref="5">
    <original>E</original>
    <variation>G</variation>
    <location>
        <position position="83"/>
    </location>
</feature>
<feature type="sequence conflict" description="In Ref. 5; BAA09830." evidence="6" ref="5">
    <original>E</original>
    <variation>G</variation>
    <location>
        <position position="91"/>
    </location>
</feature>
<feature type="sequence conflict" description="In Ref. 4; AAH11314." evidence="6" ref="4">
    <original>C</original>
    <variation>L</variation>
    <location>
        <position position="98"/>
    </location>
</feature>
<feature type="sequence conflict" description="In Ref. 4; AAH11314." evidence="6" ref="4">
    <original>N</original>
    <variation>H</variation>
    <location>
        <position position="115"/>
    </location>
</feature>
<feature type="sequence conflict" description="In Ref. 1; AAB00091." evidence="6" ref="1">
    <original>K</original>
    <variation>E</variation>
    <location>
        <position position="135"/>
    </location>
</feature>
<feature type="sequence conflict" description="In Ref. 3; CAJ18536 and 4; AAH11314." evidence="6" ref="3 4">
    <original>A</original>
    <variation>S</variation>
    <location>
        <position position="143"/>
    </location>
</feature>
<feature type="sequence conflict" description="In Ref. 5; BAA09830." evidence="6" ref="5">
    <original>H</original>
    <variation>L</variation>
    <location>
        <position position="173"/>
    </location>
</feature>
<feature type="sequence conflict" description="In Ref. 5; BAA09830." evidence="6" ref="5">
    <original>I</original>
    <variation>T</variation>
    <location>
        <position position="180"/>
    </location>
</feature>
<feature type="sequence conflict" description="In Ref. 3; CAJ18536 and 4; AAH11314." evidence="6" ref="3 4">
    <original>I</original>
    <variation>V</variation>
    <location>
        <position position="258"/>
    </location>
</feature>
<feature type="sequence conflict" description="In Ref. 4; AAH11314." evidence="6" ref="4">
    <original>T</original>
    <variation>L</variation>
    <location>
        <position position="313"/>
    </location>
</feature>
<feature type="sequence conflict" description="In Ref. 3; CAJ18536, 4; AAH11314 and 7; AAD51449." evidence="6" ref="3 4 7">
    <original>V</original>
    <variation>A</variation>
    <location>
        <position position="381"/>
    </location>
</feature>
<organism>
    <name type="scientific">Mus musculus</name>
    <name type="common">Mouse</name>
    <dbReference type="NCBI Taxonomy" id="10090"/>
    <lineage>
        <taxon>Eukaryota</taxon>
        <taxon>Metazoa</taxon>
        <taxon>Chordata</taxon>
        <taxon>Craniata</taxon>
        <taxon>Vertebrata</taxon>
        <taxon>Euteleostomi</taxon>
        <taxon>Mammalia</taxon>
        <taxon>Eutheria</taxon>
        <taxon>Euarchontoglires</taxon>
        <taxon>Glires</taxon>
        <taxon>Rodentia</taxon>
        <taxon>Myomorpha</taxon>
        <taxon>Muroidea</taxon>
        <taxon>Muridae</taxon>
        <taxon>Murinae</taxon>
        <taxon>Mus</taxon>
        <taxon>Mus</taxon>
    </lineage>
</organism>
<keyword id="KW-1003">Cell membrane</keyword>
<keyword id="KW-0180">Complement pathway</keyword>
<keyword id="KW-1015">Disulfide bond</keyword>
<keyword id="KW-0325">Glycoprotein</keyword>
<keyword id="KW-0336">GPI-anchor</keyword>
<keyword id="KW-0391">Immunity</keyword>
<keyword id="KW-0399">Innate immunity</keyword>
<keyword id="KW-0449">Lipoprotein</keyword>
<keyword id="KW-0472">Membrane</keyword>
<keyword id="KW-1185">Reference proteome</keyword>
<keyword id="KW-0677">Repeat</keyword>
<keyword id="KW-0732">Signal</keyword>
<keyword id="KW-0768">Sushi</keyword>
<gene>
    <name type="primary">Cd55</name>
    <name type="synonym">Cd55a</name>
    <name type="synonym">Daf</name>
    <name type="synonym">Daf1</name>
</gene>
<sequence length="390" mass="42618">MIRGRAPRTRPSPPPPLLPLLSLSLLLLSPTVRGDCGPPPDIPNARPILGRHSKFAEQSKVAYSCNNGFKQVPDKSNIVVCLENGQWSSHETFCEKSCVAPERLSFASLKKEYLNMNFFPVGTIVEYECRPGFRKQPPLPGKATCLEDLVWSPVAQFCKKKSCPNPKDLDNGHINIPTGILFGSEINFSCNPGYRLVGVSSTFCSVTGNTVDWDDEFPVCTEIHCPEPPKINNGIMRGESDSYTYSQVVTYSCDKGFILVGNASIYCTVSKSDVGQWSSPPPRCIEKSKVPTKKPTINVPSTGTPSTPQKPTTESVPNPGDQPTPQKPSTVKVSATQHVPVTKTTVRHPIRTSTDKGEPNTGGDRYIYGHTCLITLTVLHVMLSLIGYLT</sequence>
<reference key="1">
    <citation type="journal article" date="1995" name="J. Immunol.">
        <title>Molecular cloning and chromosomal localization of the mouse decay-accelerating factor genes. Duplicated genes encode glycosylphosphatidylinositol-anchored and transmembrane forms.</title>
        <authorList>
            <person name="Spicer A.P."/>
            <person name="Seldin M.F."/>
            <person name="Gendler S.J."/>
        </authorList>
    </citation>
    <scope>NUCLEOTIDE SEQUENCE [MRNA]</scope>
    <source>
        <strain>C57BL/6J</strain>
        <tissue>Testis</tissue>
    </source>
</reference>
<reference key="2">
    <citation type="journal article" date="2005" name="Science">
        <title>The transcriptional landscape of the mammalian genome.</title>
        <authorList>
            <person name="Carninci P."/>
            <person name="Kasukawa T."/>
            <person name="Katayama S."/>
            <person name="Gough J."/>
            <person name="Frith M.C."/>
            <person name="Maeda N."/>
            <person name="Oyama R."/>
            <person name="Ravasi T."/>
            <person name="Lenhard B."/>
            <person name="Wells C."/>
            <person name="Kodzius R."/>
            <person name="Shimokawa K."/>
            <person name="Bajic V.B."/>
            <person name="Brenner S.E."/>
            <person name="Batalov S."/>
            <person name="Forrest A.R."/>
            <person name="Zavolan M."/>
            <person name="Davis M.J."/>
            <person name="Wilming L.G."/>
            <person name="Aidinis V."/>
            <person name="Allen J.E."/>
            <person name="Ambesi-Impiombato A."/>
            <person name="Apweiler R."/>
            <person name="Aturaliya R.N."/>
            <person name="Bailey T.L."/>
            <person name="Bansal M."/>
            <person name="Baxter L."/>
            <person name="Beisel K.W."/>
            <person name="Bersano T."/>
            <person name="Bono H."/>
            <person name="Chalk A.M."/>
            <person name="Chiu K.P."/>
            <person name="Choudhary V."/>
            <person name="Christoffels A."/>
            <person name="Clutterbuck D.R."/>
            <person name="Crowe M.L."/>
            <person name="Dalla E."/>
            <person name="Dalrymple B.P."/>
            <person name="de Bono B."/>
            <person name="Della Gatta G."/>
            <person name="di Bernardo D."/>
            <person name="Down T."/>
            <person name="Engstrom P."/>
            <person name="Fagiolini M."/>
            <person name="Faulkner G."/>
            <person name="Fletcher C.F."/>
            <person name="Fukushima T."/>
            <person name="Furuno M."/>
            <person name="Futaki S."/>
            <person name="Gariboldi M."/>
            <person name="Georgii-Hemming P."/>
            <person name="Gingeras T.R."/>
            <person name="Gojobori T."/>
            <person name="Green R.E."/>
            <person name="Gustincich S."/>
            <person name="Harbers M."/>
            <person name="Hayashi Y."/>
            <person name="Hensch T.K."/>
            <person name="Hirokawa N."/>
            <person name="Hill D."/>
            <person name="Huminiecki L."/>
            <person name="Iacono M."/>
            <person name="Ikeo K."/>
            <person name="Iwama A."/>
            <person name="Ishikawa T."/>
            <person name="Jakt M."/>
            <person name="Kanapin A."/>
            <person name="Katoh M."/>
            <person name="Kawasawa Y."/>
            <person name="Kelso J."/>
            <person name="Kitamura H."/>
            <person name="Kitano H."/>
            <person name="Kollias G."/>
            <person name="Krishnan S.P."/>
            <person name="Kruger A."/>
            <person name="Kummerfeld S.K."/>
            <person name="Kurochkin I.V."/>
            <person name="Lareau L.F."/>
            <person name="Lazarevic D."/>
            <person name="Lipovich L."/>
            <person name="Liu J."/>
            <person name="Liuni S."/>
            <person name="McWilliam S."/>
            <person name="Madan Babu M."/>
            <person name="Madera M."/>
            <person name="Marchionni L."/>
            <person name="Matsuda H."/>
            <person name="Matsuzawa S."/>
            <person name="Miki H."/>
            <person name="Mignone F."/>
            <person name="Miyake S."/>
            <person name="Morris K."/>
            <person name="Mottagui-Tabar S."/>
            <person name="Mulder N."/>
            <person name="Nakano N."/>
            <person name="Nakauchi H."/>
            <person name="Ng P."/>
            <person name="Nilsson R."/>
            <person name="Nishiguchi S."/>
            <person name="Nishikawa S."/>
            <person name="Nori F."/>
            <person name="Ohara O."/>
            <person name="Okazaki Y."/>
            <person name="Orlando V."/>
            <person name="Pang K.C."/>
            <person name="Pavan W.J."/>
            <person name="Pavesi G."/>
            <person name="Pesole G."/>
            <person name="Petrovsky N."/>
            <person name="Piazza S."/>
            <person name="Reed J."/>
            <person name="Reid J.F."/>
            <person name="Ring B.Z."/>
            <person name="Ringwald M."/>
            <person name="Rost B."/>
            <person name="Ruan Y."/>
            <person name="Salzberg S.L."/>
            <person name="Sandelin A."/>
            <person name="Schneider C."/>
            <person name="Schoenbach C."/>
            <person name="Sekiguchi K."/>
            <person name="Semple C.A."/>
            <person name="Seno S."/>
            <person name="Sessa L."/>
            <person name="Sheng Y."/>
            <person name="Shibata Y."/>
            <person name="Shimada H."/>
            <person name="Shimada K."/>
            <person name="Silva D."/>
            <person name="Sinclair B."/>
            <person name="Sperling S."/>
            <person name="Stupka E."/>
            <person name="Sugiura K."/>
            <person name="Sultana R."/>
            <person name="Takenaka Y."/>
            <person name="Taki K."/>
            <person name="Tammoja K."/>
            <person name="Tan S.L."/>
            <person name="Tang S."/>
            <person name="Taylor M.S."/>
            <person name="Tegner J."/>
            <person name="Teichmann S.A."/>
            <person name="Ueda H.R."/>
            <person name="van Nimwegen E."/>
            <person name="Verardo R."/>
            <person name="Wei C.L."/>
            <person name="Yagi K."/>
            <person name="Yamanishi H."/>
            <person name="Zabarovsky E."/>
            <person name="Zhu S."/>
            <person name="Zimmer A."/>
            <person name="Hide W."/>
            <person name="Bult C."/>
            <person name="Grimmond S.M."/>
            <person name="Teasdale R.D."/>
            <person name="Liu E.T."/>
            <person name="Brusic V."/>
            <person name="Quackenbush J."/>
            <person name="Wahlestedt C."/>
            <person name="Mattick J.S."/>
            <person name="Hume D.A."/>
            <person name="Kai C."/>
            <person name="Sasaki D."/>
            <person name="Tomaru Y."/>
            <person name="Fukuda S."/>
            <person name="Kanamori-Katayama M."/>
            <person name="Suzuki M."/>
            <person name="Aoki J."/>
            <person name="Arakawa T."/>
            <person name="Iida J."/>
            <person name="Imamura K."/>
            <person name="Itoh M."/>
            <person name="Kato T."/>
            <person name="Kawaji H."/>
            <person name="Kawagashira N."/>
            <person name="Kawashima T."/>
            <person name="Kojima M."/>
            <person name="Kondo S."/>
            <person name="Konno H."/>
            <person name="Nakano K."/>
            <person name="Ninomiya N."/>
            <person name="Nishio T."/>
            <person name="Okada M."/>
            <person name="Plessy C."/>
            <person name="Shibata K."/>
            <person name="Shiraki T."/>
            <person name="Suzuki S."/>
            <person name="Tagami M."/>
            <person name="Waki K."/>
            <person name="Watahiki A."/>
            <person name="Okamura-Oho Y."/>
            <person name="Suzuki H."/>
            <person name="Kawai J."/>
            <person name="Hayashizaki Y."/>
        </authorList>
    </citation>
    <scope>NUCLEOTIDE SEQUENCE [LARGE SCALE MRNA]</scope>
    <source>
        <strain>C57BL/6J</strain>
        <tissue>Head</tissue>
    </source>
</reference>
<reference key="3">
    <citation type="submission" date="2005-07" db="EMBL/GenBank/DDBJ databases">
        <title>Cloning of mouse full open reading frames in Gateway(R) system entry vector (pDONR201).</title>
        <authorList>
            <person name="Ebert L."/>
            <person name="Muenstermann E."/>
            <person name="Schatten R."/>
            <person name="Henze S."/>
            <person name="Bohn E."/>
            <person name="Mollenhauer J."/>
            <person name="Wiemann S."/>
            <person name="Schick M."/>
            <person name="Korn B."/>
        </authorList>
    </citation>
    <scope>NUCLEOTIDE SEQUENCE [LARGE SCALE MRNA]</scope>
</reference>
<reference key="4">
    <citation type="journal article" date="2004" name="Genome Res.">
        <title>The status, quality, and expansion of the NIH full-length cDNA project: the Mammalian Gene Collection (MGC).</title>
        <authorList>
            <consortium name="The MGC Project Team"/>
        </authorList>
    </citation>
    <scope>NUCLEOTIDE SEQUENCE [LARGE SCALE MRNA]</scope>
    <source>
        <strain>Czech II</strain>
        <tissue>Mammary tumor</tissue>
    </source>
</reference>
<reference key="5">
    <citation type="journal article" date="1996" name="Int. Immunol.">
        <title>Molecular cloning of murine decay accelerating factor by immunoscreening.</title>
        <authorList>
            <person name="Fukuoka Y."/>
            <person name="Yasui A."/>
            <person name="Okada N."/>
            <person name="Okada H."/>
        </authorList>
    </citation>
    <scope>NUCLEOTIDE SEQUENCE [MRNA] OF 7-390</scope>
    <source>
        <strain>BALB/cJ</strain>
        <tissue>Spleen</tissue>
    </source>
</reference>
<reference key="6">
    <citation type="journal article" date="1998" name="Immunogenetics">
        <title>A new repetitive sequence uniquely present in the decay-accelerating factor genes.</title>
        <authorList>
            <person name="Nonaka M."/>
            <person name="Nonaka M."/>
            <person name="Takenaka O."/>
            <person name="Okada N."/>
            <person name="Okada H."/>
        </authorList>
    </citation>
    <scope>NUCLEOTIDE SEQUENCE [GENOMIC DNA] OF 315-353</scope>
    <source>
        <strain>BALB/cJ</strain>
    </source>
</reference>
<reference key="7">
    <citation type="journal article" date="1999" name="Biochem. J.">
        <title>Molecular and functional analysis of mouse decay accelerating factor (CD55).</title>
        <authorList>
            <person name="Harris C.L."/>
            <person name="Rushmere N.K."/>
            <person name="Morgan B.P."/>
        </authorList>
    </citation>
    <scope>NUCLEOTIDE SEQUENCE [MRNA] OF 369-390</scope>
    <source>
        <strain>BALB/cJ</strain>
    </source>
</reference>
<reference key="8">
    <citation type="journal article" date="2010" name="Cell">
        <title>A tissue-specific atlas of mouse protein phosphorylation and expression.</title>
        <authorList>
            <person name="Huttlin E.L."/>
            <person name="Jedrychowski M.P."/>
            <person name="Elias J.E."/>
            <person name="Goswami T."/>
            <person name="Rad R."/>
            <person name="Beausoleil S.A."/>
            <person name="Villen J."/>
            <person name="Haas W."/>
            <person name="Sowa M.E."/>
            <person name="Gygi S.P."/>
        </authorList>
    </citation>
    <scope>IDENTIFICATION BY MASS SPECTROMETRY [LARGE SCALE ANALYSIS]</scope>
    <source>
        <tissue>Testis</tissue>
    </source>
</reference>
<proteinExistence type="evidence at protein level"/>
<dbReference type="EMBL" id="L41366">
    <property type="protein sequence ID" value="AAB00091.1"/>
    <property type="molecule type" value="mRNA"/>
</dbReference>
<dbReference type="EMBL" id="AK160994">
    <property type="protein sequence ID" value="BAE36139.1"/>
    <property type="molecule type" value="mRNA"/>
</dbReference>
<dbReference type="EMBL" id="CT010328">
    <property type="protein sequence ID" value="CAJ18536.1"/>
    <property type="molecule type" value="mRNA"/>
</dbReference>
<dbReference type="EMBL" id="BC011314">
    <property type="protein sequence ID" value="AAH11314.1"/>
    <property type="molecule type" value="mRNA"/>
</dbReference>
<dbReference type="EMBL" id="D63679">
    <property type="protein sequence ID" value="BAA09830.1"/>
    <property type="molecule type" value="mRNA"/>
</dbReference>
<dbReference type="EMBL" id="AB003320">
    <property type="protein sequence ID" value="BAA22908.1"/>
    <property type="molecule type" value="Genomic_DNA"/>
</dbReference>
<dbReference type="EMBL" id="AF143541">
    <property type="protein sequence ID" value="AAD51449.1"/>
    <property type="molecule type" value="mRNA"/>
</dbReference>
<dbReference type="CCDS" id="CCDS15256.1"/>
<dbReference type="RefSeq" id="NP_034146.2">
    <property type="nucleotide sequence ID" value="NM_010016.5"/>
</dbReference>
<dbReference type="RefSeq" id="XP_017169792.1">
    <property type="nucleotide sequence ID" value="XM_017314303.1"/>
</dbReference>
<dbReference type="SMR" id="Q61475"/>
<dbReference type="BioGRID" id="199046">
    <property type="interactions" value="1"/>
</dbReference>
<dbReference type="FunCoup" id="Q61475">
    <property type="interactions" value="178"/>
</dbReference>
<dbReference type="STRING" id="10090.ENSMUSP00000027650"/>
<dbReference type="GlyCosmos" id="Q61475">
    <property type="glycosylation" value="2 sites, No reported glycans"/>
</dbReference>
<dbReference type="GlyGen" id="Q61475">
    <property type="glycosylation" value="4 sites, 1 N-linked glycan (1 site)"/>
</dbReference>
<dbReference type="PhosphoSitePlus" id="Q61475"/>
<dbReference type="SwissPalm" id="Q61475"/>
<dbReference type="CPTAC" id="non-CPTAC-3972"/>
<dbReference type="PaxDb" id="10090-ENSMUSP00000027650"/>
<dbReference type="PeptideAtlas" id="Q61475"/>
<dbReference type="ProteomicsDB" id="279312"/>
<dbReference type="DNASU" id="13136"/>
<dbReference type="Ensembl" id="ENSMUST00000027650.13">
    <property type="protein sequence ID" value="ENSMUSP00000027650.7"/>
    <property type="gene ID" value="ENSMUSG00000026399.13"/>
</dbReference>
<dbReference type="GeneID" id="13136"/>
<dbReference type="KEGG" id="mmu:13136"/>
<dbReference type="UCSC" id="uc007cly.1">
    <property type="organism name" value="mouse"/>
</dbReference>
<dbReference type="AGR" id="MGI:104850"/>
<dbReference type="CTD" id="1604"/>
<dbReference type="MGI" id="MGI:104850">
    <property type="gene designation" value="Cd55"/>
</dbReference>
<dbReference type="VEuPathDB" id="HostDB:ENSMUSG00000026399"/>
<dbReference type="eggNOG" id="ENOG502RXMW">
    <property type="taxonomic scope" value="Eukaryota"/>
</dbReference>
<dbReference type="GeneTree" id="ENSGT00940000162307"/>
<dbReference type="HOGENOM" id="CLU_020107_0_1_1"/>
<dbReference type="InParanoid" id="Q61475"/>
<dbReference type="OMA" id="PTCTEIF"/>
<dbReference type="OrthoDB" id="406096at2759"/>
<dbReference type="PhylomeDB" id="Q61475"/>
<dbReference type="TreeFam" id="TF334137"/>
<dbReference type="Reactome" id="R-MMU-373080">
    <property type="pathway name" value="Class B/2 (Secretin family receptors)"/>
</dbReference>
<dbReference type="Reactome" id="R-MMU-6798695">
    <property type="pathway name" value="Neutrophil degranulation"/>
</dbReference>
<dbReference type="Reactome" id="R-MMU-6807878">
    <property type="pathway name" value="COPI-mediated anterograde transport"/>
</dbReference>
<dbReference type="Reactome" id="R-MMU-977606">
    <property type="pathway name" value="Regulation of Complement cascade"/>
</dbReference>
<dbReference type="BioGRID-ORCS" id="13136">
    <property type="hits" value="2 hits in 76 CRISPR screens"/>
</dbReference>
<dbReference type="PRO" id="PR:Q61475"/>
<dbReference type="Proteomes" id="UP000000589">
    <property type="component" value="Chromosome 1"/>
</dbReference>
<dbReference type="RNAct" id="Q61475">
    <property type="molecule type" value="protein"/>
</dbReference>
<dbReference type="Bgee" id="ENSMUSG00000026399">
    <property type="expression patterns" value="Expressed in decidua and 206 other cell types or tissues"/>
</dbReference>
<dbReference type="ExpressionAtlas" id="Q61475">
    <property type="expression patterns" value="baseline and differential"/>
</dbReference>
<dbReference type="GO" id="GO:0009897">
    <property type="term" value="C:external side of plasma membrane"/>
    <property type="evidence" value="ECO:0000314"/>
    <property type="project" value="MGI"/>
</dbReference>
<dbReference type="GO" id="GO:0006958">
    <property type="term" value="P:complement activation, classical pathway"/>
    <property type="evidence" value="ECO:0007669"/>
    <property type="project" value="UniProtKB-KW"/>
</dbReference>
<dbReference type="GO" id="GO:0045087">
    <property type="term" value="P:innate immune response"/>
    <property type="evidence" value="ECO:0007669"/>
    <property type="project" value="UniProtKB-KW"/>
</dbReference>
<dbReference type="GO" id="GO:0045916">
    <property type="term" value="P:negative regulation of complement activation"/>
    <property type="evidence" value="ECO:0000250"/>
    <property type="project" value="UniProtKB"/>
</dbReference>
<dbReference type="GO" id="GO:0030449">
    <property type="term" value="P:regulation of complement activation"/>
    <property type="evidence" value="ECO:0000266"/>
    <property type="project" value="MGI"/>
</dbReference>
<dbReference type="GO" id="GO:0030450">
    <property type="term" value="P:regulation of complement activation, classical pathway"/>
    <property type="evidence" value="ECO:0000315"/>
    <property type="project" value="MGI"/>
</dbReference>
<dbReference type="GO" id="GO:1903659">
    <property type="term" value="P:regulation of complement-dependent cytotoxicity"/>
    <property type="evidence" value="ECO:0000266"/>
    <property type="project" value="MGI"/>
</dbReference>
<dbReference type="CDD" id="cd00033">
    <property type="entry name" value="CCP"/>
    <property type="match status" value="4"/>
</dbReference>
<dbReference type="FunFam" id="2.10.70.10:FF:000079">
    <property type="entry name" value="Complement decay-accelerating factor"/>
    <property type="match status" value="1"/>
</dbReference>
<dbReference type="FunFam" id="2.10.70.10:FF:000055">
    <property type="entry name" value="Complement decay-accelerating factor, GPI-anchored"/>
    <property type="match status" value="1"/>
</dbReference>
<dbReference type="FunFam" id="2.10.70.10:FF:000008">
    <property type="entry name" value="Complement receptor type 1"/>
    <property type="match status" value="1"/>
</dbReference>
<dbReference type="Gene3D" id="2.10.70.10">
    <property type="entry name" value="Complement Module, domain 1"/>
    <property type="match status" value="4"/>
</dbReference>
<dbReference type="InterPro" id="IPR050350">
    <property type="entry name" value="Compl-Cell_Adhes-Reg"/>
</dbReference>
<dbReference type="InterPro" id="IPR035976">
    <property type="entry name" value="Sushi/SCR/CCP_sf"/>
</dbReference>
<dbReference type="InterPro" id="IPR000436">
    <property type="entry name" value="Sushi_SCR_CCP_dom"/>
</dbReference>
<dbReference type="PANTHER" id="PTHR19325">
    <property type="entry name" value="COMPLEMENT COMPONENT-RELATED SUSHI DOMAIN-CONTAINING"/>
    <property type="match status" value="1"/>
</dbReference>
<dbReference type="PANTHER" id="PTHR19325:SF317">
    <property type="entry name" value="COMPLEMENT DECAY-ACCELERATING FACTOR"/>
    <property type="match status" value="1"/>
</dbReference>
<dbReference type="Pfam" id="PF00084">
    <property type="entry name" value="Sushi"/>
    <property type="match status" value="4"/>
</dbReference>
<dbReference type="SMART" id="SM00032">
    <property type="entry name" value="CCP"/>
    <property type="match status" value="4"/>
</dbReference>
<dbReference type="SUPFAM" id="SSF57535">
    <property type="entry name" value="Complement control module/SCR domain"/>
    <property type="match status" value="4"/>
</dbReference>
<dbReference type="PROSITE" id="PS50923">
    <property type="entry name" value="SUSHI"/>
    <property type="match status" value="4"/>
</dbReference>
<name>DAF1_MOUSE</name>